<dbReference type="EC" id="1.1.1.255"/>
<dbReference type="EMBL" id="U63534">
    <property type="protein sequence ID" value="AAD10327.1"/>
    <property type="molecule type" value="mRNA"/>
</dbReference>
<dbReference type="SMR" id="Q9ZRF1"/>
<dbReference type="GO" id="GO:0046029">
    <property type="term" value="F:mannitol dehydrogenase activity"/>
    <property type="evidence" value="ECO:0007669"/>
    <property type="project" value="UniProtKB-EC"/>
</dbReference>
<dbReference type="GO" id="GO:0008270">
    <property type="term" value="F:zinc ion binding"/>
    <property type="evidence" value="ECO:0007669"/>
    <property type="project" value="InterPro"/>
</dbReference>
<dbReference type="GO" id="GO:0009809">
    <property type="term" value="P:lignin biosynthetic process"/>
    <property type="evidence" value="ECO:0007669"/>
    <property type="project" value="UniProtKB-ARBA"/>
</dbReference>
<dbReference type="CDD" id="cd05283">
    <property type="entry name" value="CAD1"/>
    <property type="match status" value="1"/>
</dbReference>
<dbReference type="FunFam" id="3.40.50.720:FF:000022">
    <property type="entry name" value="Cinnamyl alcohol dehydrogenase"/>
    <property type="match status" value="1"/>
</dbReference>
<dbReference type="FunFam" id="3.90.180.10:FF:000100">
    <property type="entry name" value="Putative cinnamyl alcohol dehydrogenase 6"/>
    <property type="match status" value="1"/>
</dbReference>
<dbReference type="FunFam" id="3.90.180.10:FF:000126">
    <property type="entry name" value="Uncharacterized protein"/>
    <property type="match status" value="1"/>
</dbReference>
<dbReference type="Gene3D" id="3.90.180.10">
    <property type="entry name" value="Medium-chain alcohol dehydrogenases, catalytic domain"/>
    <property type="match status" value="1"/>
</dbReference>
<dbReference type="Gene3D" id="3.40.50.720">
    <property type="entry name" value="NAD(P)-binding Rossmann-like Domain"/>
    <property type="match status" value="1"/>
</dbReference>
<dbReference type="InterPro" id="IPR013149">
    <property type="entry name" value="ADH-like_C"/>
</dbReference>
<dbReference type="InterPro" id="IPR013154">
    <property type="entry name" value="ADH-like_N"/>
</dbReference>
<dbReference type="InterPro" id="IPR002328">
    <property type="entry name" value="ADH_Zn_CS"/>
</dbReference>
<dbReference type="InterPro" id="IPR047109">
    <property type="entry name" value="CAD-like"/>
</dbReference>
<dbReference type="InterPro" id="IPR011032">
    <property type="entry name" value="GroES-like_sf"/>
</dbReference>
<dbReference type="InterPro" id="IPR036291">
    <property type="entry name" value="NAD(P)-bd_dom_sf"/>
</dbReference>
<dbReference type="InterPro" id="IPR020843">
    <property type="entry name" value="PKS_ER"/>
</dbReference>
<dbReference type="PANTHER" id="PTHR42683">
    <property type="entry name" value="ALDEHYDE REDUCTASE"/>
    <property type="match status" value="1"/>
</dbReference>
<dbReference type="Pfam" id="PF08240">
    <property type="entry name" value="ADH_N"/>
    <property type="match status" value="1"/>
</dbReference>
<dbReference type="Pfam" id="PF00107">
    <property type="entry name" value="ADH_zinc_N"/>
    <property type="match status" value="1"/>
</dbReference>
<dbReference type="SMART" id="SM00829">
    <property type="entry name" value="PKS_ER"/>
    <property type="match status" value="1"/>
</dbReference>
<dbReference type="SUPFAM" id="SSF50129">
    <property type="entry name" value="GroES-like"/>
    <property type="match status" value="1"/>
</dbReference>
<dbReference type="SUPFAM" id="SSF51735">
    <property type="entry name" value="NAD(P)-binding Rossmann-fold domains"/>
    <property type="match status" value="1"/>
</dbReference>
<dbReference type="PROSITE" id="PS00059">
    <property type="entry name" value="ADH_ZINC"/>
    <property type="match status" value="1"/>
</dbReference>
<accession>Q9ZRF1</accession>
<organism>
    <name type="scientific">Fragaria ananassa</name>
    <name type="common">Strawberry</name>
    <name type="synonym">Fragaria chiloensis x Fragaria virginiana</name>
    <dbReference type="NCBI Taxonomy" id="3747"/>
    <lineage>
        <taxon>Eukaryota</taxon>
        <taxon>Viridiplantae</taxon>
        <taxon>Streptophyta</taxon>
        <taxon>Embryophyta</taxon>
        <taxon>Tracheophyta</taxon>
        <taxon>Spermatophyta</taxon>
        <taxon>Magnoliopsida</taxon>
        <taxon>eudicotyledons</taxon>
        <taxon>Gunneridae</taxon>
        <taxon>Pentapetalae</taxon>
        <taxon>rosids</taxon>
        <taxon>fabids</taxon>
        <taxon>Rosales</taxon>
        <taxon>Rosaceae</taxon>
        <taxon>Rosoideae</taxon>
        <taxon>Potentilleae</taxon>
        <taxon>Fragariinae</taxon>
        <taxon>Fragaria</taxon>
    </lineage>
</organism>
<feature type="chain" id="PRO_0000160811" description="Probable mannitol dehydrogenase">
    <location>
        <begin position="1"/>
        <end position="359"/>
    </location>
</feature>
<feature type="binding site" evidence="1">
    <location>
        <position position="48"/>
    </location>
    <ligand>
        <name>Zn(2+)</name>
        <dbReference type="ChEBI" id="CHEBI:29105"/>
        <label>1</label>
        <note>catalytic</note>
    </ligand>
</feature>
<feature type="binding site" evidence="1">
    <location>
        <position position="70"/>
    </location>
    <ligand>
        <name>Zn(2+)</name>
        <dbReference type="ChEBI" id="CHEBI:29105"/>
        <label>1</label>
        <note>catalytic</note>
    </ligand>
</feature>
<feature type="binding site" evidence="1">
    <location>
        <position position="101"/>
    </location>
    <ligand>
        <name>Zn(2+)</name>
        <dbReference type="ChEBI" id="CHEBI:29105"/>
        <label>2</label>
    </ligand>
</feature>
<feature type="binding site" evidence="1">
    <location>
        <position position="104"/>
    </location>
    <ligand>
        <name>Zn(2+)</name>
        <dbReference type="ChEBI" id="CHEBI:29105"/>
        <label>2</label>
    </ligand>
</feature>
<feature type="binding site" evidence="1">
    <location>
        <position position="107"/>
    </location>
    <ligand>
        <name>Zn(2+)</name>
        <dbReference type="ChEBI" id="CHEBI:29105"/>
        <label>2</label>
    </ligand>
</feature>
<feature type="binding site" evidence="1">
    <location>
        <position position="115"/>
    </location>
    <ligand>
        <name>Zn(2+)</name>
        <dbReference type="ChEBI" id="CHEBI:29105"/>
        <label>2</label>
    </ligand>
</feature>
<feature type="binding site" evidence="1">
    <location>
        <position position="164"/>
    </location>
    <ligand>
        <name>Zn(2+)</name>
        <dbReference type="ChEBI" id="CHEBI:29105"/>
        <label>1</label>
        <note>catalytic</note>
    </ligand>
</feature>
<keyword id="KW-0479">Metal-binding</keyword>
<keyword id="KW-0520">NAD</keyword>
<keyword id="KW-0560">Oxidoreductase</keyword>
<keyword id="KW-0862">Zinc</keyword>
<protein>
    <recommendedName>
        <fullName>Probable mannitol dehydrogenase</fullName>
        <ecNumber>1.1.1.255</ecNumber>
    </recommendedName>
    <alternativeName>
        <fullName>NAD-dependent mannitol dehydrogenase</fullName>
    </alternativeName>
</protein>
<sequence length="359" mass="39137">MAIEQEHRKKASGWAARDSSGVLSPFNFYRRETGEKDVTFKVLYCGICHSDLHMVKNEWGFSTYPLVPGHEIVGEVTEVGSKVQKFKVGDRVGVGCIVGSCRSCENCTDHLENYCPKQILTYGAKYYDGSTTYGGYSDIMVADEHFIVRIPDNLPLDGAAPLLCAGITTYSPLRYFGLDKPGMHVGVVGLGGLGHVAVKFAKAMGVKVTVISTSPKKEEEALKHLGADSFLVSRDQDQMQAAIGTMDGIIDTVSAQHPLLPLIGLLNSHGKLVMVGAPEKPLELPVFPLLMGRKMVAGSGIGGMKETQEMIDFAARHNITADIEVIPIDYLNTAMERLVKADVRYRFVIDIGNTLKVRS</sequence>
<comment type="function">
    <text evidence="1">Oxidizes mannitol to mannose. Provides the initial step by which translocated mannitol is committed to central metabolism and, by regulating mannitol pool size, is important in regulating salt tolerance at the cellular level (By similarity).</text>
</comment>
<comment type="catalytic activity">
    <reaction>
        <text>D-mannitol + NAD(+) = D-mannose + NADH + H(+)</text>
        <dbReference type="Rhea" id="RHEA:15029"/>
        <dbReference type="ChEBI" id="CHEBI:4208"/>
        <dbReference type="ChEBI" id="CHEBI:15378"/>
        <dbReference type="ChEBI" id="CHEBI:16899"/>
        <dbReference type="ChEBI" id="CHEBI:57540"/>
        <dbReference type="ChEBI" id="CHEBI:57945"/>
        <dbReference type="EC" id="1.1.1.255"/>
    </reaction>
</comment>
<comment type="cofactor">
    <cofactor evidence="1">
        <name>Zn(2+)</name>
        <dbReference type="ChEBI" id="CHEBI:29105"/>
    </cofactor>
    <text evidence="1">Binds 2 Zn(2+) ions per subunit.</text>
</comment>
<comment type="similarity">
    <text evidence="2">Belongs to the zinc-containing alcohol dehydrogenase family.</text>
</comment>
<comment type="caution">
    <text evidence="3">Was originally thought to be a cinnamyl-alcohol dehydrogenase.</text>
</comment>
<proteinExistence type="evidence at transcript level"/>
<name>MTDH_FRAAN</name>
<evidence type="ECO:0000250" key="1"/>
<evidence type="ECO:0000305" key="2"/>
<evidence type="ECO:0000305" key="3">
    <source>
    </source>
</evidence>
<reference key="1">
    <citation type="journal article" date="2002" name="J. Exp. Bot.">
        <title>Cloning, expression and immunolocalization pattern of a cinnamyl alcohol dehydrogenase gene from strawberry (Fragaria x ananassa cv. Chandler).</title>
        <authorList>
            <person name="Blanco-Portales R."/>
            <person name="Medina-Escobar N."/>
            <person name="Lopez-Raez J.A."/>
            <person name="Gonzalez-Reyes J.A."/>
            <person name="Villalba J.M."/>
            <person name="Moyano E."/>
            <person name="Caballero J.L."/>
            <person name="Munoz-Blanco J."/>
        </authorList>
    </citation>
    <scope>NUCLEOTIDE SEQUENCE [MRNA]</scope>
    <source>
        <strain>cv. Chandler</strain>
    </source>
</reference>
<gene>
    <name type="primary">CAD</name>
</gene>